<reference key="1">
    <citation type="journal article" date="2006" name="J. Biol. Chem.">
        <title>Latarcins, antimicrobial and cytolytic peptides from the venom of the spider Lachesana tarabaevi (Zodariidae) that exemplify biomolecular diversity.</title>
        <authorList>
            <person name="Kozlov S.A."/>
            <person name="Vassilevski A.A."/>
            <person name="Feofanov A.V."/>
            <person name="Surovoy A.Y."/>
            <person name="Karpunin D.V."/>
            <person name="Grishin E.V."/>
        </authorList>
    </citation>
    <scope>NUCLEOTIDE SEQUENCE [MRNA]</scope>
    <scope>SYNTHESIS OF 64-97</scope>
    <scope>FUNCTION</scope>
    <scope>SUBCELLULAR LOCATION</scope>
    <scope>DOMAIN</scope>
    <source>
        <tissue>Venom</tissue>
        <tissue>Venom gland</tissue>
    </source>
</reference>
<reference key="2">
    <citation type="journal article" date="2016" name="Biochem. J.">
        <title>Lachesana tarabaevi, an expert in membrane-active toxins.</title>
        <authorList>
            <person name="Kuzmenkov A.I."/>
            <person name="Sachkova M.Y."/>
            <person name="Kovalchuk S.I."/>
            <person name="Grishin E.V."/>
            <person name="Vassilevski A.A."/>
        </authorList>
    </citation>
    <scope>PROTEIN SEQUENCE OF 64-97</scope>
    <scope>SUBCELLULAR LOCATION</scope>
    <scope>PQM MOTIF</scope>
    <scope>MASS SPECTROMETRY</scope>
    <source>
        <tissue>Venom</tissue>
    </source>
</reference>
<keyword id="KW-0903">Direct protein sequencing</keyword>
<keyword id="KW-0964">Secreted</keyword>
<keyword id="KW-0732">Signal</keyword>
<keyword id="KW-0800">Toxin</keyword>
<proteinExistence type="evidence at protein level"/>
<feature type="signal peptide" evidence="1">
    <location>
        <begin position="1"/>
        <end position="22"/>
    </location>
</feature>
<feature type="propeptide" id="PRO_0000249758">
    <location>
        <begin position="23"/>
        <end position="63"/>
    </location>
</feature>
<feature type="peptide" id="PRO_0000249759" description="M-zodatoxin-Lt7a" evidence="3">
    <location>
        <begin position="64"/>
        <end position="97"/>
    </location>
</feature>
<feature type="short sequence motif" description="Processing quadruplet motif" evidence="5">
    <location>
        <begin position="60"/>
        <end position="63"/>
    </location>
</feature>
<accession>Q1ELV0</accession>
<protein>
    <recommendedName>
        <fullName evidence="6">M-zodatoxin-Lt7a</fullName>
        <shortName evidence="6">M-ZDTX-Lt7a</shortName>
    </recommendedName>
    <alternativeName>
        <fullName evidence="4">Latarcin-7</fullName>
        <shortName evidence="4">Ltc-7</shortName>
    </alternativeName>
</protein>
<name>LAT7_LACTA</name>
<organism>
    <name type="scientific">Lachesana tarabaevi</name>
    <name type="common">Spider</name>
    <dbReference type="NCBI Taxonomy" id="379576"/>
    <lineage>
        <taxon>Eukaryota</taxon>
        <taxon>Metazoa</taxon>
        <taxon>Ecdysozoa</taxon>
        <taxon>Arthropoda</taxon>
        <taxon>Chelicerata</taxon>
        <taxon>Arachnida</taxon>
        <taxon>Araneae</taxon>
        <taxon>Araneomorphae</taxon>
        <taxon>Entelegynae</taxon>
        <taxon>Entelegynae incertae sedis</taxon>
        <taxon>Zodariidae</taxon>
        <taxon>Lachesana</taxon>
    </lineage>
</organism>
<sequence length="97" mass="11021">MKFYVVALALLVAFVCIAESRSVETERAVDADLEDDLDDLEEYLEGIAEALELEDFPDTEEARGETFDKLKEKLKTFYQKLVEKAEDLKGDLKAKLS</sequence>
<evidence type="ECO:0000255" key="1"/>
<evidence type="ECO:0000269" key="2">
    <source>
    </source>
</evidence>
<evidence type="ECO:0000269" key="3">
    <source>
    </source>
</evidence>
<evidence type="ECO:0000303" key="4">
    <source>
    </source>
</evidence>
<evidence type="ECO:0000303" key="5">
    <source>
    </source>
</evidence>
<evidence type="ECO:0000305" key="6"/>
<evidence type="ECO:0000305" key="7">
    <source>
    </source>
</evidence>
<comment type="function">
    <text evidence="2">Does not have antimicrobial or antifungal activity. Does not have hemolytic activity against rabbit erythrocytes. However, it causes some conductance changes in planar bilayer membranes, without membrane rupture, suggesting a cytolytic function on other biological targets. It causes paralysis, but is not lethal when injected into insect (M.domestica) larvae.</text>
</comment>
<comment type="subcellular location">
    <subcellularLocation>
        <location evidence="2 3">Secreted</location>
    </subcellularLocation>
</comment>
<comment type="tissue specificity">
    <text evidence="7">Expressed by the venom gland.</text>
</comment>
<comment type="domain">
    <text evidence="4">The mature peptide (64-97) probably forms alpha-helices which disrupt target cell membranes.</text>
</comment>
<comment type="PTM">
    <text evidence="5">Cleavage of the propeptide depends on the processing quadruplet motif (XXXR, with at least one of X being E).</text>
</comment>
<comment type="mass spectrometry" mass="3942.9" method="MALDI" evidence="3"/>
<comment type="similarity">
    <text evidence="6">Belongs to the cationic peptide 03 (latarcin) family. 07 subfamily.</text>
</comment>
<dbReference type="EMBL" id="AM232689">
    <property type="protein sequence ID" value="CAJ81648.1"/>
    <property type="molecule type" value="mRNA"/>
</dbReference>
<dbReference type="SMR" id="Q1ELV0"/>
<dbReference type="ArachnoServer" id="AS000059">
    <property type="toxin name" value="M-zodatoxin-Lt7a"/>
</dbReference>
<dbReference type="GO" id="GO:0005576">
    <property type="term" value="C:extracellular region"/>
    <property type="evidence" value="ECO:0007669"/>
    <property type="project" value="UniProtKB-SubCell"/>
</dbReference>
<dbReference type="GO" id="GO:0090729">
    <property type="term" value="F:toxin activity"/>
    <property type="evidence" value="ECO:0007669"/>
    <property type="project" value="UniProtKB-KW"/>
</dbReference>
<dbReference type="InterPro" id="IPR018802">
    <property type="entry name" value="Latarcin_precursor"/>
</dbReference>
<dbReference type="Pfam" id="PF10279">
    <property type="entry name" value="Latarcin"/>
    <property type="match status" value="1"/>
</dbReference>